<reference key="1">
    <citation type="submission" date="1998-01" db="EMBL/GenBank/DDBJ databases">
        <title>Molecular evidence for centrifugal speciation in pocket gophers of the Geomys personatus complex.</title>
        <authorList>
            <person name="Wickliffe J.K."/>
            <person name="Dahl C.R."/>
            <person name="Horner P."/>
            <person name="Smolen M.J."/>
            <person name="Bickham J.W."/>
        </authorList>
    </citation>
    <scope>NUCLEOTIDE SEQUENCE [GENOMIC DNA]</scope>
</reference>
<gene>
    <name type="primary">ND5</name>
    <name type="synonym">NAD5</name>
    <name type="synonym">NADH5</name>
</gene>
<proteinExistence type="inferred from homology"/>
<comment type="function">
    <text evidence="1">Core subunit of the mitochondrial membrane respiratory chain NADH dehydrogenase (Complex I) that is believed to belong to the minimal assembly required for catalysis. Complex I functions in the transfer of electrons from NADH to the respiratory chain. The immediate electron acceptor for the enzyme is believed to be ubiquinone (By similarity).</text>
</comment>
<comment type="catalytic activity">
    <reaction>
        <text>a ubiquinone + NADH + 5 H(+)(in) = a ubiquinol + NAD(+) + 4 H(+)(out)</text>
        <dbReference type="Rhea" id="RHEA:29091"/>
        <dbReference type="Rhea" id="RHEA-COMP:9565"/>
        <dbReference type="Rhea" id="RHEA-COMP:9566"/>
        <dbReference type="ChEBI" id="CHEBI:15378"/>
        <dbReference type="ChEBI" id="CHEBI:16389"/>
        <dbReference type="ChEBI" id="CHEBI:17976"/>
        <dbReference type="ChEBI" id="CHEBI:57540"/>
        <dbReference type="ChEBI" id="CHEBI:57945"/>
        <dbReference type="EC" id="7.1.1.2"/>
    </reaction>
</comment>
<comment type="subcellular location">
    <subcellularLocation>
        <location evidence="1">Mitochondrion inner membrane</location>
        <topology evidence="1">Multi-pass membrane protein</topology>
    </subcellularLocation>
</comment>
<comment type="similarity">
    <text evidence="3">Belongs to the complex I subunit 5 family.</text>
</comment>
<feature type="chain" id="PRO_0000254950" description="NADH-ubiquinone oxidoreductase chain 5">
    <location>
        <begin position="1"/>
        <end position="599"/>
    </location>
</feature>
<feature type="transmembrane region" description="Helical" evidence="2">
    <location>
        <begin position="1"/>
        <end position="21"/>
    </location>
</feature>
<feature type="transmembrane region" description="Helical" evidence="2">
    <location>
        <begin position="41"/>
        <end position="61"/>
    </location>
</feature>
<feature type="transmembrane region" description="Helical" evidence="2">
    <location>
        <begin position="79"/>
        <end position="99"/>
    </location>
</feature>
<feature type="transmembrane region" description="Helical" evidence="2">
    <location>
        <begin position="114"/>
        <end position="134"/>
    </location>
</feature>
<feature type="transmembrane region" description="Helical" evidence="2">
    <location>
        <begin position="137"/>
        <end position="157"/>
    </location>
</feature>
<feature type="transmembrane region" description="Helical" evidence="2">
    <location>
        <begin position="166"/>
        <end position="186"/>
    </location>
</feature>
<feature type="transmembrane region" description="Helical" evidence="2">
    <location>
        <begin position="198"/>
        <end position="218"/>
    </location>
</feature>
<feature type="transmembrane region" description="Helical" evidence="2">
    <location>
        <begin position="237"/>
        <end position="257"/>
    </location>
</feature>
<feature type="transmembrane region" description="Helical" evidence="2">
    <location>
        <begin position="269"/>
        <end position="289"/>
    </location>
</feature>
<feature type="transmembrane region" description="Helical" evidence="2">
    <location>
        <begin position="297"/>
        <end position="317"/>
    </location>
</feature>
<feature type="transmembrane region" description="Helical" evidence="2">
    <location>
        <begin position="323"/>
        <end position="343"/>
    </location>
</feature>
<feature type="transmembrane region" description="Helical" evidence="2">
    <location>
        <begin position="362"/>
        <end position="382"/>
    </location>
</feature>
<feature type="transmembrane region" description="Helical" evidence="2">
    <location>
        <begin position="400"/>
        <end position="420"/>
    </location>
</feature>
<feature type="transmembrane region" description="Helical" evidence="2">
    <location>
        <begin position="453"/>
        <end position="473"/>
    </location>
</feature>
<feature type="transmembrane region" description="Helical" evidence="2">
    <location>
        <begin position="478"/>
        <end position="498"/>
    </location>
</feature>
<feature type="transmembrane region" description="Helical" evidence="2">
    <location>
        <begin position="509"/>
        <end position="529"/>
    </location>
</feature>
<feature type="transmembrane region" description="Helical" evidence="2">
    <location>
        <begin position="578"/>
        <end position="598"/>
    </location>
</feature>
<evidence type="ECO:0000250" key="1"/>
<evidence type="ECO:0000255" key="2"/>
<evidence type="ECO:0000305" key="3"/>
<dbReference type="EC" id="7.1.1.2"/>
<dbReference type="EMBL" id="AF041078">
    <property type="protein sequence ID" value="AAB96777.1"/>
    <property type="molecule type" value="Genomic_DNA"/>
</dbReference>
<dbReference type="SMR" id="O47815"/>
<dbReference type="GO" id="GO:0005743">
    <property type="term" value="C:mitochondrial inner membrane"/>
    <property type="evidence" value="ECO:0007669"/>
    <property type="project" value="UniProtKB-SubCell"/>
</dbReference>
<dbReference type="GO" id="GO:0008137">
    <property type="term" value="F:NADH dehydrogenase (ubiquinone) activity"/>
    <property type="evidence" value="ECO:0007669"/>
    <property type="project" value="UniProtKB-EC"/>
</dbReference>
<dbReference type="GO" id="GO:0042773">
    <property type="term" value="P:ATP synthesis coupled electron transport"/>
    <property type="evidence" value="ECO:0007669"/>
    <property type="project" value="InterPro"/>
</dbReference>
<dbReference type="GO" id="GO:0015990">
    <property type="term" value="P:electron transport coupled proton transport"/>
    <property type="evidence" value="ECO:0007669"/>
    <property type="project" value="TreeGrafter"/>
</dbReference>
<dbReference type="InterPro" id="IPR010934">
    <property type="entry name" value="NADH_DH_su5_C"/>
</dbReference>
<dbReference type="InterPro" id="IPR018393">
    <property type="entry name" value="NADHpl_OxRdtase_5_subgr"/>
</dbReference>
<dbReference type="InterPro" id="IPR001750">
    <property type="entry name" value="ND/Mrp_TM"/>
</dbReference>
<dbReference type="InterPro" id="IPR003945">
    <property type="entry name" value="NU5C-like"/>
</dbReference>
<dbReference type="InterPro" id="IPR001516">
    <property type="entry name" value="Proton_antipo_N"/>
</dbReference>
<dbReference type="NCBIfam" id="TIGR01974">
    <property type="entry name" value="NDH_I_L"/>
    <property type="match status" value="1"/>
</dbReference>
<dbReference type="PANTHER" id="PTHR42829">
    <property type="entry name" value="NADH-UBIQUINONE OXIDOREDUCTASE CHAIN 5"/>
    <property type="match status" value="1"/>
</dbReference>
<dbReference type="PANTHER" id="PTHR42829:SF2">
    <property type="entry name" value="NADH-UBIQUINONE OXIDOREDUCTASE CHAIN 5"/>
    <property type="match status" value="1"/>
</dbReference>
<dbReference type="Pfam" id="PF06455">
    <property type="entry name" value="NADH5_C"/>
    <property type="match status" value="1"/>
</dbReference>
<dbReference type="Pfam" id="PF00361">
    <property type="entry name" value="Proton_antipo_M"/>
    <property type="match status" value="1"/>
</dbReference>
<dbReference type="Pfam" id="PF00662">
    <property type="entry name" value="Proton_antipo_N"/>
    <property type="match status" value="1"/>
</dbReference>
<dbReference type="PRINTS" id="PR01434">
    <property type="entry name" value="NADHDHGNASE5"/>
</dbReference>
<geneLocation type="mitochondrion"/>
<accession>O47815</accession>
<organism>
    <name type="scientific">Geomys personatus</name>
    <name type="common">Texas pocket gopher</name>
    <dbReference type="NCBI Taxonomy" id="35659"/>
    <lineage>
        <taxon>Eukaryota</taxon>
        <taxon>Metazoa</taxon>
        <taxon>Chordata</taxon>
        <taxon>Craniata</taxon>
        <taxon>Vertebrata</taxon>
        <taxon>Euteleostomi</taxon>
        <taxon>Mammalia</taxon>
        <taxon>Eutheria</taxon>
        <taxon>Euarchontoglires</taxon>
        <taxon>Glires</taxon>
        <taxon>Rodentia</taxon>
        <taxon>Castorimorpha</taxon>
        <taxon>Geomyidae</taxon>
        <taxon>Geomys</taxon>
    </lineage>
</organism>
<name>NU5M_GEOPE</name>
<sequence length="599" mass="67687">MALMIFSMVFMFILLFKPLVFSMMNKKCLNSTYTSTVKWAFITSMIPLMMYMNSSKEIIILNWHWLTVHTIELKMSFKLDLYSITFMPVALYVTWSIMEYSTWYMKHDPHLKRFLNYLSLFLITMLILVTANNMFQLFIGWEGVGIMSFLLIGWWYGRTDANTAALQAIIYNRVGDIGLVIAMAWFYKNSNSWELQQIFSLGTTSNLPLIGLILAAMGKSAQFGLHPWLPSAMEGPTPVSALLHSSTMVVAGVFLLIRFHPLMSNNSMIMTTILCIGAMTTLFTAICALTQNDIKKIIAFSTSSQLGLMMVTLGINQPYLSFLHICTHAFFKAMLFMCAGSIIHNLNDEQDIRKMGGISKTMPLTASAMTIGNLALMGTPFMSGFYSKDLIIESMNTSNINSWALITTLIATSLTAAYSTRLIYFVLSNSPRCNSVINMNESDNKLTSPIKRLMLGSIFAGFLLSNFIQPVNMQNMTMPFTIKITAMLVTIMGVIVAMELNLMTQYMKMYPNNYNFNFSIMLGFFPTIIHRSVSKSFLNFNQKIATSLMDYMWLEKIVPNAVVMMNNAASATTSTHKGMLKIYFMSFILSMVMLMLIMS</sequence>
<keyword id="KW-0249">Electron transport</keyword>
<keyword id="KW-0472">Membrane</keyword>
<keyword id="KW-0496">Mitochondrion</keyword>
<keyword id="KW-0999">Mitochondrion inner membrane</keyword>
<keyword id="KW-0520">NAD</keyword>
<keyword id="KW-0679">Respiratory chain</keyword>
<keyword id="KW-1278">Translocase</keyword>
<keyword id="KW-0812">Transmembrane</keyword>
<keyword id="KW-1133">Transmembrane helix</keyword>
<keyword id="KW-0813">Transport</keyword>
<keyword id="KW-0830">Ubiquinone</keyword>
<protein>
    <recommendedName>
        <fullName>NADH-ubiquinone oxidoreductase chain 5</fullName>
        <ecNumber>7.1.1.2</ecNumber>
    </recommendedName>
    <alternativeName>
        <fullName>NADH dehydrogenase subunit 5</fullName>
    </alternativeName>
</protein>